<proteinExistence type="evidence at transcript level"/>
<organism>
    <name type="scientific">Caenorhabditis elegans</name>
    <dbReference type="NCBI Taxonomy" id="6239"/>
    <lineage>
        <taxon>Eukaryota</taxon>
        <taxon>Metazoa</taxon>
        <taxon>Ecdysozoa</taxon>
        <taxon>Nematoda</taxon>
        <taxon>Chromadorea</taxon>
        <taxon>Rhabditida</taxon>
        <taxon>Rhabditina</taxon>
        <taxon>Rhabditomorpha</taxon>
        <taxon>Rhabditoidea</taxon>
        <taxon>Rhabditidae</taxon>
        <taxon>Peloderinae</taxon>
        <taxon>Caenorhabditis</taxon>
    </lineage>
</organism>
<gene>
    <name evidence="8" type="primary">vha-2</name>
    <name evidence="8" type="ORF">R10E11.2</name>
</gene>
<sequence length="161" mass="16410">MSYDLETAERAAYAPFFGYMGAASAQIFTVLGAAYGTAKSAVGICSMGVMRPELIMKSVIPVIMAGIIGIYGLVVAMVLKGKVTSASAGYDLNKGFAHLAAGLTCGLCGLGAGYAIGIVGDAGVRGTAQQPRLFVGMILILIFSEVLGLYGMIVALILGTS</sequence>
<feature type="chain" id="PRO_0000071758" description="V-type proton ATPase 16 kDa proteolipid subunit c 2">
    <location>
        <begin position="1"/>
        <end position="161"/>
    </location>
</feature>
<feature type="topological domain" description="Lumenal" evidence="3">
    <location>
        <begin position="1"/>
        <end position="15"/>
    </location>
</feature>
<feature type="transmembrane region" description="Helical" evidence="3">
    <location>
        <begin position="16"/>
        <end position="36"/>
    </location>
</feature>
<feature type="topological domain" description="Cytoplasmic" evidence="3">
    <location>
        <begin position="37"/>
        <end position="58"/>
    </location>
</feature>
<feature type="transmembrane region" description="Helical" evidence="3">
    <location>
        <begin position="59"/>
        <end position="79"/>
    </location>
</feature>
<feature type="topological domain" description="Lumenal" evidence="3">
    <location>
        <begin position="80"/>
        <end position="98"/>
    </location>
</feature>
<feature type="transmembrane region" description="Helical" evidence="3">
    <location>
        <begin position="99"/>
        <end position="119"/>
    </location>
</feature>
<feature type="topological domain" description="Cytoplasmic" evidence="3">
    <location>
        <begin position="120"/>
        <end position="137"/>
    </location>
</feature>
<feature type="transmembrane region" description="Helical" evidence="3">
    <location>
        <begin position="138"/>
        <end position="158"/>
    </location>
</feature>
<feature type="topological domain" description="Lumenal" evidence="3">
    <location>
        <begin position="159"/>
        <end position="161"/>
    </location>
</feature>
<feature type="site" description="Essential for proton translocation" evidence="2">
    <location>
        <position position="145"/>
    </location>
</feature>
<reference key="1">
    <citation type="journal article" date="1997" name="J. Biol. Chem.">
        <title>Three vha genes encode proteolipids of Caenorhabditis elegans vacuolar-type ATPase. Gene structures and preferential expression in an H-shaped excretory cell and rectal cells.</title>
        <authorList>
            <person name="Oka T."/>
            <person name="Yamamoto R."/>
            <person name="Futai M."/>
        </authorList>
    </citation>
    <scope>NUCLEOTIDE SEQUENCE [MRNA]</scope>
    <scope>TISSUE SPECIFICITY</scope>
</reference>
<reference key="2">
    <citation type="journal article" date="1994" name="Nature">
        <title>2.2 Mb of contiguous nucleotide sequence from chromosome III of C. elegans.</title>
        <authorList>
            <person name="Wilson R."/>
            <person name="Ainscough R."/>
            <person name="Anderson K."/>
            <person name="Baynes C."/>
            <person name="Berks M."/>
            <person name="Bonfield J."/>
            <person name="Burton J."/>
            <person name="Connell M."/>
            <person name="Copsey T."/>
            <person name="Cooper J."/>
            <person name="Coulson A."/>
            <person name="Craxton M."/>
            <person name="Dear S."/>
            <person name="Du Z."/>
            <person name="Durbin R."/>
            <person name="Favello A."/>
            <person name="Fraser A."/>
            <person name="Fulton L."/>
            <person name="Gardner A."/>
            <person name="Green P."/>
            <person name="Hawkins T."/>
            <person name="Hillier L."/>
            <person name="Jier M."/>
            <person name="Johnston L."/>
            <person name="Jones M."/>
            <person name="Kershaw J."/>
            <person name="Kirsten J."/>
            <person name="Laisster N."/>
            <person name="Latreille P."/>
            <person name="Lightning J."/>
            <person name="Lloyd C."/>
            <person name="Mortimore B."/>
            <person name="O'Callaghan M."/>
            <person name="Parsons J."/>
            <person name="Percy C."/>
            <person name="Rifken L."/>
            <person name="Roopra A."/>
            <person name="Saunders D."/>
            <person name="Shownkeen R."/>
            <person name="Sims M."/>
            <person name="Smaldon N."/>
            <person name="Smith A."/>
            <person name="Smith M."/>
            <person name="Sonnhammer E."/>
            <person name="Staden R."/>
            <person name="Sulston J."/>
            <person name="Thierry-Mieg J."/>
            <person name="Thomas K."/>
            <person name="Vaudin M."/>
            <person name="Vaughan K."/>
            <person name="Waterston R."/>
            <person name="Watson A."/>
            <person name="Weinstock L."/>
            <person name="Wilkinson-Sproat J."/>
            <person name="Wohldman P."/>
        </authorList>
    </citation>
    <scope>NUCLEOTIDE SEQUENCE [LARGE SCALE GENOMIC DNA]</scope>
    <source>
        <strain>Bristol N2</strain>
    </source>
</reference>
<reference key="3">
    <citation type="journal article" date="1998" name="Science">
        <title>Genome sequence of the nematode C. elegans: a platform for investigating biology.</title>
        <authorList>
            <consortium name="The C. elegans sequencing consortium"/>
        </authorList>
    </citation>
    <scope>NUCLEOTIDE SEQUENCE [LARGE SCALE GENOMIC DNA]</scope>
    <source>
        <strain>Bristol N2</strain>
    </source>
</reference>
<reference key="4">
    <citation type="journal article" date="2012" name="EMBO J.">
        <title>Endocytosis and intracellular trafficking contribute to necrotic neurodegeneration in C. elegans.</title>
        <authorList>
            <person name="Troulinaki K."/>
            <person name="Tavernarakis N."/>
        </authorList>
    </citation>
    <scope>FUNCTION</scope>
    <scope>DISRUPTION PHENOTYPE</scope>
</reference>
<reference key="5">
    <citation type="journal article" date="2017" name="Nature">
        <title>A lysosomal switch triggers proteostasis renewal in the immortal C. elegans germ lineage.</title>
        <authorList>
            <person name="Bohnert K.A."/>
            <person name="Kenyon C."/>
        </authorList>
    </citation>
    <scope>FUNCTION</scope>
    <scope>DISRUPTION PHENOTYPE</scope>
</reference>
<evidence type="ECO:0000250" key="1">
    <source>
        <dbReference type="UniProtKB" id="P23956"/>
    </source>
</evidence>
<evidence type="ECO:0000250" key="2">
    <source>
        <dbReference type="UniProtKB" id="P63081"/>
    </source>
</evidence>
<evidence type="ECO:0000255" key="3"/>
<evidence type="ECO:0000269" key="4">
    <source>
    </source>
</evidence>
<evidence type="ECO:0000269" key="5">
    <source>
    </source>
</evidence>
<evidence type="ECO:0000269" key="6">
    <source>
    </source>
</evidence>
<evidence type="ECO:0000305" key="7"/>
<evidence type="ECO:0000312" key="8">
    <source>
        <dbReference type="WormBase" id="R10E11.2"/>
    </source>
</evidence>
<dbReference type="EMBL" id="AB000918">
    <property type="protein sequence ID" value="BAA22596.1"/>
    <property type="molecule type" value="mRNA"/>
</dbReference>
<dbReference type="EMBL" id="BX284603">
    <property type="protein sequence ID" value="CAA82355.1"/>
    <property type="molecule type" value="Genomic_DNA"/>
</dbReference>
<dbReference type="PIR" id="C88565">
    <property type="entry name" value="C88565"/>
</dbReference>
<dbReference type="RefSeq" id="NP_499166.1">
    <property type="nucleotide sequence ID" value="NM_066765.9"/>
</dbReference>
<dbReference type="RefSeq" id="NP_500188.1">
    <property type="nucleotide sequence ID" value="NM_067787.6"/>
</dbReference>
<dbReference type="SMR" id="C0HLB3"/>
<dbReference type="FunCoup" id="C0HLB3">
    <property type="interactions" value="2158"/>
</dbReference>
<dbReference type="STRING" id="6239.R10E11.2.1"/>
<dbReference type="PaxDb" id="6239-R10E11.2"/>
<dbReference type="EnsemblMetazoa" id="R10E11.2.1">
    <property type="protein sequence ID" value="R10E11.2.1"/>
    <property type="gene ID" value="WBGene00006911"/>
</dbReference>
<dbReference type="GeneID" id="187779"/>
<dbReference type="KEGG" id="cel:CELE_R10E11.2"/>
<dbReference type="CTD" id="187779"/>
<dbReference type="WormBase" id="R10E11.2">
    <property type="protein sequence ID" value="CE06290"/>
    <property type="gene ID" value="WBGene00006911"/>
    <property type="gene designation" value="vha-2"/>
</dbReference>
<dbReference type="InParanoid" id="C0HLB3"/>
<dbReference type="OMA" id="MGVMKPD"/>
<dbReference type="OrthoDB" id="1744869at2759"/>
<dbReference type="Reactome" id="R-CEL-1222556">
    <property type="pathway name" value="ROS and RNS production in phagocytes"/>
</dbReference>
<dbReference type="Reactome" id="R-CEL-6798695">
    <property type="pathway name" value="Neutrophil degranulation"/>
</dbReference>
<dbReference type="Reactome" id="R-CEL-77387">
    <property type="pathway name" value="Insulin receptor recycling"/>
</dbReference>
<dbReference type="Reactome" id="R-CEL-917977">
    <property type="pathway name" value="Transferrin endocytosis and recycling"/>
</dbReference>
<dbReference type="Reactome" id="R-CEL-9639288">
    <property type="pathway name" value="Amino acids regulate mTORC1"/>
</dbReference>
<dbReference type="Reactome" id="R-CEL-983712">
    <property type="pathway name" value="Ion channel transport"/>
</dbReference>
<dbReference type="PRO" id="PR:C0HLB3"/>
<dbReference type="Proteomes" id="UP000001940">
    <property type="component" value="Chromosome III"/>
</dbReference>
<dbReference type="Bgee" id="WBGene00006911">
    <property type="expression patterns" value="Expressed in embryo and 4 other cell types or tissues"/>
</dbReference>
<dbReference type="ExpressionAtlas" id="C0HLB3">
    <property type="expression patterns" value="baseline"/>
</dbReference>
<dbReference type="GO" id="GO:0016020">
    <property type="term" value="C:membrane"/>
    <property type="evidence" value="ECO:0000318"/>
    <property type="project" value="GO_Central"/>
</dbReference>
<dbReference type="GO" id="GO:0033179">
    <property type="term" value="C:proton-transporting V-type ATPase, V0 domain"/>
    <property type="evidence" value="ECO:0007669"/>
    <property type="project" value="InterPro"/>
</dbReference>
<dbReference type="GO" id="GO:0046961">
    <property type="term" value="F:proton-transporting ATPase activity, rotational mechanism"/>
    <property type="evidence" value="ECO:0007669"/>
    <property type="project" value="InterPro"/>
</dbReference>
<dbReference type="GO" id="GO:0007042">
    <property type="term" value="P:lysosomal lumen acidification"/>
    <property type="evidence" value="ECO:0000315"/>
    <property type="project" value="UniProtKB"/>
</dbReference>
<dbReference type="GO" id="GO:0070266">
    <property type="term" value="P:necroptotic process"/>
    <property type="evidence" value="ECO:0000316"/>
    <property type="project" value="WormBase"/>
</dbReference>
<dbReference type="GO" id="GO:1902600">
    <property type="term" value="P:proton transmembrane transport"/>
    <property type="evidence" value="ECO:0000303"/>
    <property type="project" value="UniProtKB"/>
</dbReference>
<dbReference type="CDD" id="cd18175">
    <property type="entry name" value="ATP-synt_Vo_c_ATP6C_rpt1"/>
    <property type="match status" value="1"/>
</dbReference>
<dbReference type="CDD" id="cd18176">
    <property type="entry name" value="ATP-synt_Vo_c_ATP6C_rpt2"/>
    <property type="match status" value="1"/>
</dbReference>
<dbReference type="FunFam" id="1.20.120.610:FF:000001">
    <property type="entry name" value="V-type proton ATPase proteolipid subunit"/>
    <property type="match status" value="1"/>
</dbReference>
<dbReference type="Gene3D" id="1.20.120.610">
    <property type="entry name" value="lithium bound rotor ring of v- atpase"/>
    <property type="match status" value="1"/>
</dbReference>
<dbReference type="InterPro" id="IPR002379">
    <property type="entry name" value="ATPase_proteolipid_c-like_dom"/>
</dbReference>
<dbReference type="InterPro" id="IPR000245">
    <property type="entry name" value="ATPase_proteolipid_csu"/>
</dbReference>
<dbReference type="InterPro" id="IPR011555">
    <property type="entry name" value="ATPase_proteolipid_su_C_euk"/>
</dbReference>
<dbReference type="InterPro" id="IPR035921">
    <property type="entry name" value="F/V-ATP_Csub_sf"/>
</dbReference>
<dbReference type="NCBIfam" id="TIGR01100">
    <property type="entry name" value="V_ATP_synt_C"/>
    <property type="match status" value="1"/>
</dbReference>
<dbReference type="PANTHER" id="PTHR10263">
    <property type="entry name" value="V-TYPE PROTON ATPASE PROTEOLIPID SUBUNIT"/>
    <property type="match status" value="1"/>
</dbReference>
<dbReference type="Pfam" id="PF00137">
    <property type="entry name" value="ATP-synt_C"/>
    <property type="match status" value="2"/>
</dbReference>
<dbReference type="PRINTS" id="PR00122">
    <property type="entry name" value="VACATPASE"/>
</dbReference>
<dbReference type="SUPFAM" id="SSF81333">
    <property type="entry name" value="F1F0 ATP synthase subunit C"/>
    <property type="match status" value="2"/>
</dbReference>
<protein>
    <recommendedName>
        <fullName evidence="7">V-type proton ATPase 16 kDa proteolipid subunit c 2</fullName>
        <shortName evidence="7">V-ATPase 16 kDa proteolipid subunit c 2</shortName>
    </recommendedName>
    <alternativeName>
        <fullName evidence="7">Vacuolar proton pump 16 kDa proteolipid subunit c 2</fullName>
    </alternativeName>
</protein>
<comment type="function">
    <text evidence="1 4 5">Proton-conducting pore forming subunit of the V0 complex of vacuolar(H+)-ATPase (V-ATPase), a multisubunit enzyme composed of a peripheral complex (V1) that hydrolyzes ATP and a membrane integral complex (V0) that translocates protons (By similarity). V-ATPase is responsible for acidifying and maintaining the pH of intracellular compartments and in some cell types, is targeted to the plasma membrane, where it is responsible for acidifying the extracellular environment (By similarity). Involved in necrotic cell death (PubMed:22157748). Required along with other vacuolar ATPase components for the removal of protein aggregates which form in immature oocytes in the distal gonad (PubMed:29168500). This removal occurs as the oocytes mature and move to the proximal gonad, is triggered by the introduction of sperm through mating and occurs before fertilization (PubMed:29168500). The introduction of sperm triggers V-ATPase accumulation in proximal oocytes and induces lysosomal acidification which leads to engulfing of protein aggregates by lysosomes and subsequent clearance of the aggregates (PubMed:29168500). Lysosomal acidification also leads to changes in mitochondrial morphology and function (PubMed:29168500). Mitochondria in distal immature oocytes are fragmented, produce high levels of reactive oxygen species (ROS) and have high membrane potential, indicative of metabolic inactivity (PubMed:29168500). In contrast, mitochondria in proximal mature oocytes are tubular with lower ROS levels and membrane potential, indicative of an active metabolic state required for aggregate mobilization before clearance (PubMed:29168500).</text>
</comment>
<comment type="subunit">
    <text evidence="1">V-ATPase is a heteromultimeric enzyme made up of two complexes: the ATP-hydrolytic V1 complex and the proton translocation V0 complex (By similarity). The V1 complex consists of three catalytic AB heterodimers that form a heterohexamer, three peripheral stalks each consisting of EG heterodimers, one central rotor including subunits D and F, and the regulatory subunits C and H (By similarity). The proton translocation complex V0 consists of the proton transport subunit a, a ring of proteolipid subunits c9c'', rotary subunit d, subunits e and f, and the accessory subunits vah-19/Ac45 and vah-20/PRR (By similarity).</text>
</comment>
<comment type="subcellular location">
    <subcellularLocation>
        <location evidence="3">Membrane</location>
        <topology evidence="3">Multi-pass membrane protein</topology>
    </subcellularLocation>
</comment>
<comment type="tissue specificity">
    <text evidence="6">Expressed in the H-shaped excretory cell, rectum, and a pair of cells posterior to the anus.</text>
</comment>
<comment type="disruption phenotype">
    <text evidence="4 5">RNAi-mediated knockdown results in increased protein aggregation in the oocytes of sperm-deficient young adult females which is not eliminated by mating (PubMed:29168500). RNAi-mediated knockdown causes a reduction in the formation of neuron cell corpses in a hyperactive mec-4 mutant background (PubMed:22157748).</text>
</comment>
<comment type="similarity">
    <text evidence="7">Belongs to the V-ATPase proteolipid subunit family.</text>
</comment>
<keyword id="KW-0375">Hydrogen ion transport</keyword>
<keyword id="KW-0406">Ion transport</keyword>
<keyword id="KW-0472">Membrane</keyword>
<keyword id="KW-1210">Necrosis</keyword>
<keyword id="KW-1185">Reference proteome</keyword>
<keyword id="KW-0812">Transmembrane</keyword>
<keyword id="KW-1133">Transmembrane helix</keyword>
<keyword id="KW-0813">Transport</keyword>
<name>VATL2_CAEEL</name>
<accession>C0HLB3</accession>
<accession>P34546</accession>
<accession>P83577</accession>